<comment type="function">
    <text evidence="1 3 4">Component of intercellular desmosome junctions (By similarity). Positively regulates apoptosis in the early-stage embryo in response to UV irradiation, this is partially dependent on tp53 activation (PubMed:15529176). Required for the survival of cell populations in the developing notochord and skin, therefore required for normal embryogenesis beyond 30 hpf (PubMed:15529176). Acts as a positive regulator of endothelial cell apoptosis in response to blood flow-derived shear stress (PubMed:27834691).</text>
</comment>
<comment type="subcellular location">
    <subcellularLocation>
        <location evidence="1">Cell junction</location>
        <location evidence="1">Desmosome</location>
    </subcellularLocation>
    <subcellularLocation>
        <location evidence="1">Cell membrane</location>
        <topology evidence="2">Multi-pass membrane protein</topology>
    </subcellularLocation>
    <subcellularLocation>
        <location evidence="1">Cytoplasm</location>
    </subcellularLocation>
</comment>
<comment type="developmental stage">
    <text evidence="3 4">Initially expressed in the monolayer of cells covering the embryo at the onset of gastrulation (6 hpf) (PubMed:15529176). Expressed by the cells of the prechordal plate mesoderm and in single mesodermal cells in dorsal marginal regions giving rise to the notochord at 8 hpf (PubMed:15529176). Expressed throughout the entire notochord anlage along the dorsal midline of the embryo at 10 hpf (PubMed:15529176). Strong expression is detected in the notochord, eye vesicles, lenses, ventral diencephalon, hindbrain and otic vesicles at 24 hpf (PubMed:15529176). Expressed in both epidermal cell layers, the basal layer and the outer keratinocyte layer of the skin at 24 hpf (PubMed:15529176). Expressed in embryonic endothelial cells at 26 hpf (PubMed:27834691). Expressed in the skin, nasal pits, gut, liver and pronephric ducts at 36 hpf (PubMed:15529176). Expressed in the skin, otic vesicle, gut, hepatic duct, pancreas and cartilage-forming chondrocytes in the pectoral fins at 48 hpf (PubMed:15529176).</text>
</comment>
<comment type="induction">
    <text evidence="3">Induced by UV irradiation of early stage embryos, this is partially dependent on the presence of tp53 (PubMed:15529176). Induced by tp53 expression from 10 hpf onwards (PubMed:15529176).</text>
</comment>
<comment type="disruption phenotype">
    <text evidence="3 4">Morpholino knockdown embryos show a decrease in apoptosis in response to UV irradiation during late blastula stage embryos (4 hpf) (PubMed:15529176). Gastrulation continues normally, however embryos show increased levels of apoptosis at the end of gastrulation at 10 hpf and develop a severely malformed body shape from 24 hpf onwards when cells in the skin and fin folds appear rounded (PubMed:15529176). Significant increase in apoptosis of cells in the skin, pectoral fins and notochord at 30 and 36 hpf (PubMed:15529176). Disorganized epithelial cells in the fins and skin become severe, the tail fin is collapsed, and the body skin appears very rough at 48 hpf (PubMed:15529176). Additionally, pectoral fins are shortened and malformed, cells of the notochord appear round and disorganized, and the body length is reduced at 48 hpf (PubMed:15529176). Decrease in endothelial cell apoptosis in the absence of blood flow (PubMed:27834691).</text>
</comment>
<comment type="similarity">
    <text evidence="5">Belongs to the TMEM47 family.</text>
</comment>
<accession>E9QHT9</accession>
<accession>A0A8M1NZE2</accession>
<sequence length="185" mass="21088">MFRCGIDYTRCRWILPMLLLFAIIFDIIAIAAQSGWVEDQDAKTHYASMWKQCRGRNDQWDCKSLMEFSWAQAVAALMIIGLIILIFAFIISLVALCSTVNVSLLPFIGLLLILAVIVQIIALIIYPVKFNEQIYEGYYDYTWAYGFGWGATILTLGCAILFCCLPRYESEITGLEKTKYIYQSG</sequence>
<keyword id="KW-0053">Apoptosis</keyword>
<keyword id="KW-0130">Cell adhesion</keyword>
<keyword id="KW-0965">Cell junction</keyword>
<keyword id="KW-1003">Cell membrane</keyword>
<keyword id="KW-0963">Cytoplasm</keyword>
<keyword id="KW-0472">Membrane</keyword>
<keyword id="KW-1185">Reference proteome</keyword>
<keyword id="KW-0812">Transmembrane</keyword>
<keyword id="KW-1133">Transmembrane helix</keyword>
<organism evidence="6">
    <name type="scientific">Danio rerio</name>
    <name type="common">Zebrafish</name>
    <name type="synonym">Brachydanio rerio</name>
    <dbReference type="NCBI Taxonomy" id="7955"/>
    <lineage>
        <taxon>Eukaryota</taxon>
        <taxon>Metazoa</taxon>
        <taxon>Chordata</taxon>
        <taxon>Craniata</taxon>
        <taxon>Vertebrata</taxon>
        <taxon>Euteleostomi</taxon>
        <taxon>Actinopterygii</taxon>
        <taxon>Neopterygii</taxon>
        <taxon>Teleostei</taxon>
        <taxon>Ostariophysi</taxon>
        <taxon>Cypriniformes</taxon>
        <taxon>Danionidae</taxon>
        <taxon>Danioninae</taxon>
        <taxon>Danio</taxon>
    </lineage>
</organism>
<dbReference type="EMBL" id="BX323887">
    <property type="status" value="NOT_ANNOTATED_CDS"/>
    <property type="molecule type" value="Genomic_DNA"/>
</dbReference>
<dbReference type="RefSeq" id="NP_001243136.1">
    <property type="nucleotide sequence ID" value="NM_001256207.1"/>
</dbReference>
<dbReference type="SMR" id="E9QHT9"/>
<dbReference type="FunCoup" id="E9QHT9">
    <property type="interactions" value="1320"/>
</dbReference>
<dbReference type="STRING" id="7955.ENSDARP00000118851"/>
<dbReference type="PaxDb" id="7955-ENSDARP00000087449"/>
<dbReference type="Ensembl" id="ENSDART00000148356">
    <property type="protein sequence ID" value="ENSDARP00000118851"/>
    <property type="gene ID" value="ENSDARG00000063572"/>
</dbReference>
<dbReference type="GeneID" id="494479"/>
<dbReference type="KEGG" id="dre:494479"/>
<dbReference type="AGR" id="ZFIN:ZDB-GENE-050104-1"/>
<dbReference type="CTD" id="64065"/>
<dbReference type="ZFIN" id="ZDB-GENE-050104-1">
    <property type="gene designation" value="perp"/>
</dbReference>
<dbReference type="eggNOG" id="KOG4671">
    <property type="taxonomic scope" value="Eukaryota"/>
</dbReference>
<dbReference type="HOGENOM" id="CLU_120054_0_0_1"/>
<dbReference type="OMA" id="RCGLACW"/>
<dbReference type="OrthoDB" id="8868135at2759"/>
<dbReference type="PhylomeDB" id="E9QHT9"/>
<dbReference type="Proteomes" id="UP000000437">
    <property type="component" value="Chromosome 13"/>
</dbReference>
<dbReference type="Bgee" id="ENSDARG00000063572">
    <property type="expression patterns" value="Expressed in caudal fin and 43 other cell types or tissues"/>
</dbReference>
<dbReference type="GO" id="GO:0005911">
    <property type="term" value="C:cell-cell junction"/>
    <property type="evidence" value="ECO:0000318"/>
    <property type="project" value="GO_Central"/>
</dbReference>
<dbReference type="GO" id="GO:0005737">
    <property type="term" value="C:cytoplasm"/>
    <property type="evidence" value="ECO:0007669"/>
    <property type="project" value="UniProtKB-SubCell"/>
</dbReference>
<dbReference type="GO" id="GO:0030057">
    <property type="term" value="C:desmosome"/>
    <property type="evidence" value="ECO:0007669"/>
    <property type="project" value="UniProtKB-SubCell"/>
</dbReference>
<dbReference type="GO" id="GO:0005886">
    <property type="term" value="C:plasma membrane"/>
    <property type="evidence" value="ECO:0007669"/>
    <property type="project" value="UniProtKB-SubCell"/>
</dbReference>
<dbReference type="GO" id="GO:1902262">
    <property type="term" value="P:apoptotic process involved in blood vessel morphogenesis"/>
    <property type="evidence" value="ECO:0000315"/>
    <property type="project" value="ZFIN"/>
</dbReference>
<dbReference type="GO" id="GO:0098609">
    <property type="term" value="P:cell-cell adhesion"/>
    <property type="evidence" value="ECO:0000318"/>
    <property type="project" value="GO_Central"/>
</dbReference>
<dbReference type="GO" id="GO:0042981">
    <property type="term" value="P:regulation of apoptotic process"/>
    <property type="evidence" value="ECO:0000315"/>
    <property type="project" value="ZFIN"/>
</dbReference>
<dbReference type="GO" id="GO:0009411">
    <property type="term" value="P:response to UV"/>
    <property type="evidence" value="ECO:0000315"/>
    <property type="project" value="ZFIN"/>
</dbReference>
<dbReference type="FunFam" id="1.20.140.150:FF:000068">
    <property type="entry name" value="P53 apoptosis effector-related to pmp22"/>
    <property type="match status" value="1"/>
</dbReference>
<dbReference type="Gene3D" id="1.20.140.150">
    <property type="match status" value="1"/>
</dbReference>
<dbReference type="InterPro" id="IPR015664">
    <property type="entry name" value="P53_induced"/>
</dbReference>
<dbReference type="InterPro" id="IPR004031">
    <property type="entry name" value="PMP22/EMP/MP20/Claudin"/>
</dbReference>
<dbReference type="PANTHER" id="PTHR14399:SF4">
    <property type="entry name" value="P53 APOPTOSIS EFFECTOR RELATED TO PMP-22"/>
    <property type="match status" value="1"/>
</dbReference>
<dbReference type="PANTHER" id="PTHR14399">
    <property type="entry name" value="P53-INDUCED PROTEIN RELATED"/>
    <property type="match status" value="1"/>
</dbReference>
<dbReference type="Pfam" id="PF00822">
    <property type="entry name" value="PMP22_Claudin"/>
    <property type="match status" value="1"/>
</dbReference>
<feature type="chain" id="PRO_0000460383" description="p53 apoptosis effector related to PMP-22">
    <location>
        <begin position="1"/>
        <end position="185"/>
    </location>
</feature>
<feature type="transmembrane region" description="Helical" evidence="2">
    <location>
        <begin position="13"/>
        <end position="33"/>
    </location>
</feature>
<feature type="transmembrane region" description="Helical" evidence="2">
    <location>
        <begin position="74"/>
        <end position="94"/>
    </location>
</feature>
<feature type="transmembrane region" description="Helical" evidence="2">
    <location>
        <begin position="105"/>
        <end position="125"/>
    </location>
</feature>
<feature type="transmembrane region" description="Helical" evidence="2">
    <location>
        <begin position="143"/>
        <end position="163"/>
    </location>
</feature>
<evidence type="ECO:0000250" key="1">
    <source>
        <dbReference type="UniProtKB" id="Q9JK95"/>
    </source>
</evidence>
<evidence type="ECO:0000255" key="2"/>
<evidence type="ECO:0000269" key="3">
    <source>
    </source>
</evidence>
<evidence type="ECO:0000269" key="4">
    <source>
    </source>
</evidence>
<evidence type="ECO:0000305" key="5"/>
<evidence type="ECO:0000312" key="6">
    <source>
        <dbReference type="Proteomes" id="UP000000437"/>
    </source>
</evidence>
<evidence type="ECO:0000312" key="7">
    <source>
        <dbReference type="RefSeq" id="NP_001243136.1"/>
    </source>
</evidence>
<evidence type="ECO:0000312" key="8">
    <source>
        <dbReference type="ZFIN" id="ZDB-GENE-050104-1"/>
    </source>
</evidence>
<reference evidence="7" key="1">
    <citation type="journal article" date="2005" name="Cell Death Differ.">
        <title>Perp is required for tissue-specific cell survival during zebrafish development.</title>
        <authorList>
            <person name="Nowak M."/>
            <person name="Koester C."/>
            <person name="Hammerschmidt M."/>
        </authorList>
    </citation>
    <scope>NUCLEOTIDE SEQUENCE [MRNA]</scope>
    <scope>FUNCTION</scope>
    <scope>DEVELOPMENTAL STAGE</scope>
    <scope>INDUCTION BY UV AND TP53</scope>
    <scope>DISRUPTION PHENOTYPE</scope>
</reference>
<reference evidence="5" key="2">
    <citation type="journal article" date="2017" name="Arterioscler. Thromb. Vasc. Biol.">
        <title>Zebrafish Model for Functional Screening of Flow-Responsive Genes.</title>
        <authorList>
            <person name="Serbanovic-Canic J."/>
            <person name="de Luca A."/>
            <person name="Warboys C."/>
            <person name="Ferreira P.F."/>
            <person name="Luong L.A."/>
            <person name="Hsiao S."/>
            <person name="Gauci I."/>
            <person name="Mahmoud M."/>
            <person name="Feng S."/>
            <person name="Souilhol C."/>
            <person name="Bowden N."/>
            <person name="Ashton J.P."/>
            <person name="Walczak H."/>
            <person name="Firmin D."/>
            <person name="Krams R."/>
            <person name="Mason J.C."/>
            <person name="Haskard D.O."/>
            <person name="Sherwin S."/>
            <person name="Ridger V."/>
            <person name="Chico T.J."/>
            <person name="Evans P.C."/>
        </authorList>
    </citation>
    <scope>NUCLEOTIDE SEQUENCE [MRNA]</scope>
    <scope>FUNCTION</scope>
    <scope>DEVELOPMENTAL STAGE</scope>
    <scope>DISRUPTION PHENOTYPE</scope>
</reference>
<reference evidence="6" key="3">
    <citation type="journal article" date="2013" name="Nature">
        <title>The zebrafish reference genome sequence and its relationship to the human genome.</title>
        <authorList>
            <person name="Howe K."/>
            <person name="Clark M.D."/>
            <person name="Torroja C.F."/>
            <person name="Torrance J."/>
            <person name="Berthelot C."/>
            <person name="Muffato M."/>
            <person name="Collins J.E."/>
            <person name="Humphray S."/>
            <person name="McLaren K."/>
            <person name="Matthews L."/>
            <person name="McLaren S."/>
            <person name="Sealy I."/>
            <person name="Caccamo M."/>
            <person name="Churcher C."/>
            <person name="Scott C."/>
            <person name="Barrett J.C."/>
            <person name="Koch R."/>
            <person name="Rauch G.J."/>
            <person name="White S."/>
            <person name="Chow W."/>
            <person name="Kilian B."/>
            <person name="Quintais L.T."/>
            <person name="Guerra-Assuncao J.A."/>
            <person name="Zhou Y."/>
            <person name="Gu Y."/>
            <person name="Yen J."/>
            <person name="Vogel J.H."/>
            <person name="Eyre T."/>
            <person name="Redmond S."/>
            <person name="Banerjee R."/>
            <person name="Chi J."/>
            <person name="Fu B."/>
            <person name="Langley E."/>
            <person name="Maguire S.F."/>
            <person name="Laird G.K."/>
            <person name="Lloyd D."/>
            <person name="Kenyon E."/>
            <person name="Donaldson S."/>
            <person name="Sehra H."/>
            <person name="Almeida-King J."/>
            <person name="Loveland J."/>
            <person name="Trevanion S."/>
            <person name="Jones M."/>
            <person name="Quail M."/>
            <person name="Willey D."/>
            <person name="Hunt A."/>
            <person name="Burton J."/>
            <person name="Sims S."/>
            <person name="McLay K."/>
            <person name="Plumb B."/>
            <person name="Davis J."/>
            <person name="Clee C."/>
            <person name="Oliver K."/>
            <person name="Clark R."/>
            <person name="Riddle C."/>
            <person name="Elliot D."/>
            <person name="Threadgold G."/>
            <person name="Harden G."/>
            <person name="Ware D."/>
            <person name="Begum S."/>
            <person name="Mortimore B."/>
            <person name="Kerry G."/>
            <person name="Heath P."/>
            <person name="Phillimore B."/>
            <person name="Tracey A."/>
            <person name="Corby N."/>
            <person name="Dunn M."/>
            <person name="Johnson C."/>
            <person name="Wood J."/>
            <person name="Clark S."/>
            <person name="Pelan S."/>
            <person name="Griffiths G."/>
            <person name="Smith M."/>
            <person name="Glithero R."/>
            <person name="Howden P."/>
            <person name="Barker N."/>
            <person name="Lloyd C."/>
            <person name="Stevens C."/>
            <person name="Harley J."/>
            <person name="Holt K."/>
            <person name="Panagiotidis G."/>
            <person name="Lovell J."/>
            <person name="Beasley H."/>
            <person name="Henderson C."/>
            <person name="Gordon D."/>
            <person name="Auger K."/>
            <person name="Wright D."/>
            <person name="Collins J."/>
            <person name="Raisen C."/>
            <person name="Dyer L."/>
            <person name="Leung K."/>
            <person name="Robertson L."/>
            <person name="Ambridge K."/>
            <person name="Leongamornlert D."/>
            <person name="McGuire S."/>
            <person name="Gilderthorp R."/>
            <person name="Griffiths C."/>
            <person name="Manthravadi D."/>
            <person name="Nichol S."/>
            <person name="Barker G."/>
            <person name="Whitehead S."/>
            <person name="Kay M."/>
            <person name="Brown J."/>
            <person name="Murnane C."/>
            <person name="Gray E."/>
            <person name="Humphries M."/>
            <person name="Sycamore N."/>
            <person name="Barker D."/>
            <person name="Saunders D."/>
            <person name="Wallis J."/>
            <person name="Babbage A."/>
            <person name="Hammond S."/>
            <person name="Mashreghi-Mohammadi M."/>
            <person name="Barr L."/>
            <person name="Martin S."/>
            <person name="Wray P."/>
            <person name="Ellington A."/>
            <person name="Matthews N."/>
            <person name="Ellwood M."/>
            <person name="Woodmansey R."/>
            <person name="Clark G."/>
            <person name="Cooper J."/>
            <person name="Tromans A."/>
            <person name="Grafham D."/>
            <person name="Skuce C."/>
            <person name="Pandian R."/>
            <person name="Andrews R."/>
            <person name="Harrison E."/>
            <person name="Kimberley A."/>
            <person name="Garnett J."/>
            <person name="Fosker N."/>
            <person name="Hall R."/>
            <person name="Garner P."/>
            <person name="Kelly D."/>
            <person name="Bird C."/>
            <person name="Palmer S."/>
            <person name="Gehring I."/>
            <person name="Berger A."/>
            <person name="Dooley C.M."/>
            <person name="Ersan-Urun Z."/>
            <person name="Eser C."/>
            <person name="Geiger H."/>
            <person name="Geisler M."/>
            <person name="Karotki L."/>
            <person name="Kirn A."/>
            <person name="Konantz J."/>
            <person name="Konantz M."/>
            <person name="Oberlander M."/>
            <person name="Rudolph-Geiger S."/>
            <person name="Teucke M."/>
            <person name="Lanz C."/>
            <person name="Raddatz G."/>
            <person name="Osoegawa K."/>
            <person name="Zhu B."/>
            <person name="Rapp A."/>
            <person name="Widaa S."/>
            <person name="Langford C."/>
            <person name="Yang F."/>
            <person name="Schuster S.C."/>
            <person name="Carter N.P."/>
            <person name="Harrow J."/>
            <person name="Ning Z."/>
            <person name="Herrero J."/>
            <person name="Searle S.M."/>
            <person name="Enright A."/>
            <person name="Geisler R."/>
            <person name="Plasterk R.H."/>
            <person name="Lee C."/>
            <person name="Westerfield M."/>
            <person name="de Jong P.J."/>
            <person name="Zon L.I."/>
            <person name="Postlethwait J.H."/>
            <person name="Nusslein-Volhard C."/>
            <person name="Hubbard T.J."/>
            <person name="Roest Crollius H."/>
            <person name="Rogers J."/>
            <person name="Stemple D.L."/>
        </authorList>
    </citation>
    <scope>NUCLEOTIDE SEQUENCE [LARGE SCALE GENOMIC DNA]</scope>
    <source>
        <strain evidence="6">Tuebingen</strain>
    </source>
</reference>
<protein>
    <recommendedName>
        <fullName evidence="8">p53 apoptosis effector related to PMP-22</fullName>
    </recommendedName>
</protein>
<proteinExistence type="evidence at transcript level"/>
<gene>
    <name evidence="8" type="primary">perp</name>
    <name evidence="8" type="synonym">fk24g11</name>
</gene>
<name>PERP_DANRE</name>